<accession>P97355</accession>
<accession>A2AC82</accession>
<accession>Q3TL65</accession>
<accession>Q3TUP0</accession>
<accession>Q3UDT8</accession>
<accession>Q8C7P4</accession>
<accession>Q9CT09</accession>
<accession>Q9R282</accession>
<keyword id="KW-0007">Acetylation</keyword>
<keyword id="KW-0903">Direct protein sequencing</keyword>
<keyword id="KW-0597">Phosphoprotein</keyword>
<keyword id="KW-0620">Polyamine biosynthesis</keyword>
<keyword id="KW-1185">Reference proteome</keyword>
<keyword id="KW-0808">Transferase</keyword>
<name>SPSY_MOUSE</name>
<feature type="initiator methionine" description="Removed" evidence="1">
    <location>
        <position position="1"/>
    </location>
</feature>
<feature type="chain" id="PRO_0000156539" description="Spermine synthase">
    <location>
        <begin position="2"/>
        <end position="366"/>
    </location>
</feature>
<feature type="domain" description="PABS" evidence="2">
    <location>
        <begin position="122"/>
        <end position="362"/>
    </location>
</feature>
<feature type="active site" description="Proton acceptor" evidence="2">
    <location>
        <position position="276"/>
    </location>
</feature>
<feature type="binding site" evidence="1">
    <location>
        <position position="148"/>
    </location>
    <ligand>
        <name>S-adenosyl 3-(methylsulfanyl)propylamine</name>
        <dbReference type="ChEBI" id="CHEBI:57443"/>
    </ligand>
</feature>
<feature type="binding site" evidence="1">
    <location>
        <position position="177"/>
    </location>
    <ligand>
        <name>spermidine</name>
        <dbReference type="ChEBI" id="CHEBI:57834"/>
    </ligand>
</feature>
<feature type="binding site" evidence="1">
    <location>
        <position position="201"/>
    </location>
    <ligand>
        <name>spermidine</name>
        <dbReference type="ChEBI" id="CHEBI:57834"/>
    </ligand>
</feature>
<feature type="binding site" evidence="1">
    <location>
        <position position="220"/>
    </location>
    <ligand>
        <name>S-adenosyl 3-(methylsulfanyl)propylamine</name>
        <dbReference type="ChEBI" id="CHEBI:57443"/>
    </ligand>
</feature>
<feature type="binding site" evidence="1">
    <location>
        <begin position="255"/>
        <end position="256"/>
    </location>
    <ligand>
        <name>S-adenosyl 3-(methylsulfanyl)propylamine</name>
        <dbReference type="ChEBI" id="CHEBI:57443"/>
    </ligand>
</feature>
<feature type="binding site" evidence="1">
    <location>
        <position position="351"/>
    </location>
    <ligand>
        <name>spermidine</name>
        <dbReference type="ChEBI" id="CHEBI:57834"/>
    </ligand>
</feature>
<feature type="binding site" evidence="1">
    <location>
        <position position="353"/>
    </location>
    <ligand>
        <name>spermidine</name>
        <dbReference type="ChEBI" id="CHEBI:57834"/>
    </ligand>
</feature>
<feature type="modified residue" description="N-acetylalanine" evidence="1">
    <location>
        <position position="2"/>
    </location>
</feature>
<feature type="modified residue" description="Phosphoserine" evidence="1">
    <location>
        <position position="57"/>
    </location>
</feature>
<feature type="sequence conflict" description="In Ref. 3; BAC33920." evidence="7" ref="3">
    <original>D</original>
    <variation>H</variation>
    <location>
        <position position="188"/>
    </location>
</feature>
<feature type="sequence conflict" description="In Ref. 3; BAC33920." evidence="7" ref="3">
    <original>R</original>
    <variation>K</variation>
    <location>
        <position position="245"/>
    </location>
</feature>
<proteinExistence type="evidence at protein level"/>
<dbReference type="EC" id="2.5.1.22" evidence="1"/>
<dbReference type="EMBL" id="Y09419">
    <property type="protein sequence ID" value="CAA70573.1"/>
    <property type="molecule type" value="mRNA"/>
</dbReference>
<dbReference type="EMBL" id="AF031486">
    <property type="protein sequence ID" value="AAB86631.1"/>
    <property type="molecule type" value="mRNA"/>
</dbReference>
<dbReference type="EMBL" id="AK049787">
    <property type="protein sequence ID" value="BAC33920.1"/>
    <property type="molecule type" value="mRNA"/>
</dbReference>
<dbReference type="EMBL" id="AK011542">
    <property type="protein sequence ID" value="BAB27685.1"/>
    <property type="molecule type" value="mRNA"/>
</dbReference>
<dbReference type="EMBL" id="AK017775">
    <property type="protein sequence ID" value="BAB30923.1"/>
    <property type="molecule type" value="mRNA"/>
</dbReference>
<dbReference type="EMBL" id="AK149929">
    <property type="protein sequence ID" value="BAE29173.1"/>
    <property type="molecule type" value="mRNA"/>
</dbReference>
<dbReference type="EMBL" id="AK160637">
    <property type="protein sequence ID" value="BAE35931.1"/>
    <property type="molecule type" value="mRNA"/>
</dbReference>
<dbReference type="EMBL" id="AK160659">
    <property type="protein sequence ID" value="BAE35947.1"/>
    <property type="molecule type" value="mRNA"/>
</dbReference>
<dbReference type="EMBL" id="AK166665">
    <property type="protein sequence ID" value="BAE38927.1"/>
    <property type="molecule type" value="mRNA"/>
</dbReference>
<dbReference type="EMBL" id="AL663072">
    <property type="status" value="NOT_ANNOTATED_CDS"/>
    <property type="molecule type" value="Genomic_DNA"/>
</dbReference>
<dbReference type="EMBL" id="BC046623">
    <property type="protein sequence ID" value="AAH46623.1"/>
    <property type="molecule type" value="mRNA"/>
</dbReference>
<dbReference type="EMBL" id="BC058688">
    <property type="protein sequence ID" value="AAH58688.1"/>
    <property type="molecule type" value="mRNA"/>
</dbReference>
<dbReference type="EMBL" id="AF136179">
    <property type="protein sequence ID" value="AAD33057.1"/>
    <property type="molecule type" value="Genomic_DNA"/>
</dbReference>
<dbReference type="EMBL" id="AJ000093">
    <property type="protein sequence ID" value="CAA03919.1"/>
    <property type="molecule type" value="Genomic_DNA"/>
</dbReference>
<dbReference type="EMBL" id="AJ000087">
    <property type="protein sequence ID" value="CAA03918.1"/>
    <property type="molecule type" value="Genomic_DNA"/>
</dbReference>
<dbReference type="EMBL" id="AJ000088">
    <property type="protein sequence ID" value="CAA03918.1"/>
    <property type="status" value="JOINED"/>
    <property type="molecule type" value="Genomic_DNA"/>
</dbReference>
<dbReference type="EMBL" id="AJ000089">
    <property type="protein sequence ID" value="CAA03918.1"/>
    <property type="status" value="JOINED"/>
    <property type="molecule type" value="Genomic_DNA"/>
</dbReference>
<dbReference type="EMBL" id="AJ000090">
    <property type="protein sequence ID" value="CAA03918.1"/>
    <property type="status" value="JOINED"/>
    <property type="molecule type" value="Genomic_DNA"/>
</dbReference>
<dbReference type="EMBL" id="AJ000091">
    <property type="protein sequence ID" value="CAA03918.1"/>
    <property type="status" value="JOINED"/>
    <property type="molecule type" value="Genomic_DNA"/>
</dbReference>
<dbReference type="EMBL" id="AJ000092">
    <property type="protein sequence ID" value="CAA03918.1"/>
    <property type="status" value="JOINED"/>
    <property type="molecule type" value="Genomic_DNA"/>
</dbReference>
<dbReference type="CCDS" id="CCDS41189.1"/>
<dbReference type="RefSeq" id="NP_033240.3">
    <property type="nucleotide sequence ID" value="NM_009214.3"/>
</dbReference>
<dbReference type="RefSeq" id="XP_001473484.1">
    <property type="nucleotide sequence ID" value="XM_001473434.6"/>
</dbReference>
<dbReference type="SMR" id="P97355"/>
<dbReference type="BioGRID" id="203351">
    <property type="interactions" value="1"/>
</dbReference>
<dbReference type="FunCoup" id="P97355">
    <property type="interactions" value="1898"/>
</dbReference>
<dbReference type="STRING" id="10090.ENSMUSP00000108148"/>
<dbReference type="GlyGen" id="P97355">
    <property type="glycosylation" value="2 sites, 1 N-linked glycan (1 site), 1 O-linked glycan (1 site)"/>
</dbReference>
<dbReference type="iPTMnet" id="P97355"/>
<dbReference type="PhosphoSitePlus" id="P97355"/>
<dbReference type="jPOST" id="P97355"/>
<dbReference type="PaxDb" id="10090-ENSMUSP00000108148"/>
<dbReference type="PeptideAtlas" id="P97355"/>
<dbReference type="ProteomicsDB" id="258732"/>
<dbReference type="Pumba" id="P97355"/>
<dbReference type="Antibodypedia" id="24466">
    <property type="antibodies" value="402 antibodies from 28 providers"/>
</dbReference>
<dbReference type="DNASU" id="20603"/>
<dbReference type="Ensembl" id="ENSMUST00000112529.8">
    <property type="protein sequence ID" value="ENSMUSP00000108148.2"/>
    <property type="gene ID" value="ENSMUSG00000071708.12"/>
</dbReference>
<dbReference type="GeneID" id="20603"/>
<dbReference type="KEGG" id="mmu:20603"/>
<dbReference type="UCSC" id="uc033jve.1">
    <property type="organism name" value="mouse"/>
</dbReference>
<dbReference type="AGR" id="MGI:109490"/>
<dbReference type="CTD" id="6611"/>
<dbReference type="MGI" id="MGI:109490">
    <property type="gene designation" value="Sms"/>
</dbReference>
<dbReference type="VEuPathDB" id="HostDB:ENSMUSG00000071708"/>
<dbReference type="eggNOG" id="KOG1562">
    <property type="taxonomic scope" value="Eukaryota"/>
</dbReference>
<dbReference type="GeneTree" id="ENSGT00870000136506"/>
<dbReference type="HOGENOM" id="CLU_048650_1_0_1"/>
<dbReference type="InParanoid" id="P97355"/>
<dbReference type="OMA" id="PDGKEPI"/>
<dbReference type="OrthoDB" id="5953636at2759"/>
<dbReference type="PhylomeDB" id="P97355"/>
<dbReference type="TreeFam" id="TF324508"/>
<dbReference type="Reactome" id="R-MMU-351202">
    <property type="pathway name" value="Metabolism of polyamines"/>
</dbReference>
<dbReference type="UniPathway" id="UPA00249">
    <property type="reaction ID" value="UER00315"/>
</dbReference>
<dbReference type="BioGRID-ORCS" id="20603">
    <property type="hits" value="5 hits in 78 CRISPR screens"/>
</dbReference>
<dbReference type="BioGRID-ORCS" id="671878">
    <property type="hits" value="0 hits in 1 CRISPR screen"/>
</dbReference>
<dbReference type="ChiTaRS" id="Sms">
    <property type="organism name" value="mouse"/>
</dbReference>
<dbReference type="PRO" id="PR:P97355"/>
<dbReference type="Proteomes" id="UP000000589">
    <property type="component" value="Chromosome X"/>
</dbReference>
<dbReference type="RNAct" id="P97355">
    <property type="molecule type" value="protein"/>
</dbReference>
<dbReference type="Bgee" id="ENSMUSG00000071708">
    <property type="expression patterns" value="Expressed in motor neuron and 271 other cell types or tissues"/>
</dbReference>
<dbReference type="ExpressionAtlas" id="P97355">
    <property type="expression patterns" value="baseline and differential"/>
</dbReference>
<dbReference type="GO" id="GO:0016768">
    <property type="term" value="F:spermine synthase activity"/>
    <property type="evidence" value="ECO:0000266"/>
    <property type="project" value="MGI"/>
</dbReference>
<dbReference type="GO" id="GO:0006597">
    <property type="term" value="P:spermine biosynthetic process"/>
    <property type="evidence" value="ECO:0007669"/>
    <property type="project" value="UniProtKB-UniPathway"/>
</dbReference>
<dbReference type="GO" id="GO:0008215">
    <property type="term" value="P:spermine metabolic process"/>
    <property type="evidence" value="ECO:0000315"/>
    <property type="project" value="MGI"/>
</dbReference>
<dbReference type="CDD" id="cd02440">
    <property type="entry name" value="AdoMet_MTases"/>
    <property type="match status" value="1"/>
</dbReference>
<dbReference type="FunFam" id="2.30.140.10:FF:000005">
    <property type="entry name" value="Spermine synthase"/>
    <property type="match status" value="1"/>
</dbReference>
<dbReference type="FunFam" id="3.30.160.110:FF:000002">
    <property type="entry name" value="spermine synthase"/>
    <property type="match status" value="1"/>
</dbReference>
<dbReference type="FunFam" id="3.40.50.150:FF:000059">
    <property type="entry name" value="spermine synthase"/>
    <property type="match status" value="1"/>
</dbReference>
<dbReference type="Gene3D" id="3.30.160.110">
    <property type="entry name" value="Siroheme synthase, domain 2"/>
    <property type="match status" value="1"/>
</dbReference>
<dbReference type="Gene3D" id="2.30.140.10">
    <property type="entry name" value="Spermidine synthase, tetramerisation domain"/>
    <property type="match status" value="1"/>
</dbReference>
<dbReference type="Gene3D" id="3.40.50.150">
    <property type="entry name" value="Vaccinia Virus protein VP39"/>
    <property type="match status" value="1"/>
</dbReference>
<dbReference type="InterPro" id="IPR030374">
    <property type="entry name" value="PABS"/>
</dbReference>
<dbReference type="InterPro" id="IPR030373">
    <property type="entry name" value="PABS_CS"/>
</dbReference>
<dbReference type="InterPro" id="IPR029063">
    <property type="entry name" value="SAM-dependent_MTases_sf"/>
</dbReference>
<dbReference type="InterPro" id="IPR035246">
    <property type="entry name" value="Spermidine_synt_N"/>
</dbReference>
<dbReference type="InterPro" id="IPR037163">
    <property type="entry name" value="Spermidine_synt_N_sf"/>
</dbReference>
<dbReference type="InterPro" id="IPR015576">
    <property type="entry name" value="Spermine_synthase_animal"/>
</dbReference>
<dbReference type="InterPro" id="IPR040900">
    <property type="entry name" value="SpmSyn_N"/>
</dbReference>
<dbReference type="PANTHER" id="PTHR46315">
    <property type="entry name" value="SPERMINE SYNTHASE"/>
    <property type="match status" value="1"/>
</dbReference>
<dbReference type="PANTHER" id="PTHR46315:SF1">
    <property type="entry name" value="SPERMINE SYNTHASE"/>
    <property type="match status" value="1"/>
</dbReference>
<dbReference type="Pfam" id="PF17284">
    <property type="entry name" value="Spermine_synt_N"/>
    <property type="match status" value="1"/>
</dbReference>
<dbReference type="Pfam" id="PF01564">
    <property type="entry name" value="Spermine_synth"/>
    <property type="match status" value="1"/>
</dbReference>
<dbReference type="Pfam" id="PF17950">
    <property type="entry name" value="SpmSyn_N"/>
    <property type="match status" value="1"/>
</dbReference>
<dbReference type="SUPFAM" id="SSF53335">
    <property type="entry name" value="S-adenosyl-L-methionine-dependent methyltransferases"/>
    <property type="match status" value="1"/>
</dbReference>
<dbReference type="PROSITE" id="PS01330">
    <property type="entry name" value="PABS_1"/>
    <property type="match status" value="1"/>
</dbReference>
<dbReference type="PROSITE" id="PS51006">
    <property type="entry name" value="PABS_2"/>
    <property type="match status" value="1"/>
</dbReference>
<gene>
    <name type="primary">Sms</name>
</gene>
<evidence type="ECO:0000250" key="1">
    <source>
        <dbReference type="UniProtKB" id="P52788"/>
    </source>
</evidence>
<evidence type="ECO:0000255" key="2">
    <source>
        <dbReference type="PROSITE-ProRule" id="PRU00354"/>
    </source>
</evidence>
<evidence type="ECO:0000269" key="3">
    <source>
    </source>
</evidence>
<evidence type="ECO:0000269" key="4">
    <source>
    </source>
</evidence>
<evidence type="ECO:0000303" key="5">
    <source>
    </source>
</evidence>
<evidence type="ECO:0000303" key="6">
    <source ref="2"/>
</evidence>
<evidence type="ECO:0000305" key="7"/>
<organism>
    <name type="scientific">Mus musculus</name>
    <name type="common">Mouse</name>
    <dbReference type="NCBI Taxonomy" id="10090"/>
    <lineage>
        <taxon>Eukaryota</taxon>
        <taxon>Metazoa</taxon>
        <taxon>Chordata</taxon>
        <taxon>Craniata</taxon>
        <taxon>Vertebrata</taxon>
        <taxon>Euteleostomi</taxon>
        <taxon>Mammalia</taxon>
        <taxon>Eutheria</taxon>
        <taxon>Euarchontoglires</taxon>
        <taxon>Glires</taxon>
        <taxon>Rodentia</taxon>
        <taxon>Myomorpha</taxon>
        <taxon>Muroidea</taxon>
        <taxon>Muridae</taxon>
        <taxon>Murinae</taxon>
        <taxon>Mus</taxon>
        <taxon>Mus</taxon>
    </lineage>
</organism>
<comment type="function">
    <text evidence="3 4">Catalyzes the production of spermine from spermidine and decarboxylated S-adenosylmethionine (dcSAM) (PubMed:9467015). Required for normal viability, growth and fertility (PubMed:15459188).</text>
</comment>
<comment type="catalytic activity">
    <reaction evidence="1">
        <text>S-adenosyl 3-(methylsulfanyl)propylamine + spermidine = spermine + S-methyl-5'-thioadenosine + H(+)</text>
        <dbReference type="Rhea" id="RHEA:19973"/>
        <dbReference type="ChEBI" id="CHEBI:15378"/>
        <dbReference type="ChEBI" id="CHEBI:17509"/>
        <dbReference type="ChEBI" id="CHEBI:45725"/>
        <dbReference type="ChEBI" id="CHEBI:57443"/>
        <dbReference type="ChEBI" id="CHEBI:57834"/>
        <dbReference type="EC" id="2.5.1.22"/>
    </reaction>
    <physiologicalReaction direction="left-to-right" evidence="1">
        <dbReference type="Rhea" id="RHEA:19974"/>
    </physiologicalReaction>
</comment>
<comment type="pathway">
    <text evidence="1">Amine and polyamine biosynthesis; spermine biosynthesis; spermine from spermidine: step 1/1.</text>
</comment>
<comment type="subunit">
    <text evidence="1">Homodimer. Dimerization is mediated through the N-terminal domain and seems to be required for activity as deletion of the N-terminal domain causes complete loss of activity.</text>
</comment>
<comment type="domain">
    <text evidence="1">Composed of 3 domains: the N-terminal domain has structural similarity to S-adenosylmethionine decarboxylase, the central domain is made up of four beta strands and the C-terminal domain is similar in structure to spermidine synthase. The N- and C-terminal domains are both required for activity.</text>
</comment>
<comment type="disruption phenotype">
    <text evidence="3 4">Mouse ES cells lacking Sms display normal growth rates but are sensitive to antiproliferative and DNA damage-inducing drugs.</text>
</comment>
<comment type="similarity">
    <text evidence="7">Belongs to the spermidine/spermine synthase family.</text>
</comment>
<sequence>MAAARHSTLDFKLGAKADGEAILKGLQSIFQEQGMTESVHTWQDHGYLATYTNKNGSFANLRIYPHGLVLLDLQSYDSDVQGKQETDSLLNKIEEKMKELSQDSTGRVKRLPPIVRGGAIDRYWPTADGRLVEYDIDEVVYDEDSPYQNIKILHSKQFGNILILSGDVNLAESDLAYTRAIMGSGKEDYTGKDVLILGGGDGGILCEIVKLKPKMVTMVEIDQMVIDGCKKYMRRTCGDVLDNLRGDCYQVLIEDCIPVLKMYAKEGREFDYVINDLTAVPISTSPEEDSTWDFLRLILDLSMKVLKQDGKYFTQGNCVNLTEALSLYEEQLGRLYCPVEFSKEIVCVPSYLELWVFYTVWKKAKP</sequence>
<reference key="1">
    <citation type="journal article" date="1997" name="Hum. Mol. Genet.">
        <title>Pex gene deletions in Gy and Hyp mice provide mouse models for X-linked hypophosphatemia.</title>
        <authorList>
            <person name="Strom T.M."/>
            <person name="Francis F."/>
            <person name="Lorenz B."/>
            <person name="Boeddrich A."/>
            <person name="Econs M.J."/>
            <person name="Lehrach H."/>
            <person name="Meitinger T."/>
        </authorList>
    </citation>
    <scope>NUCLEOTIDE SEQUENCE [MRNA]</scope>
</reference>
<reference key="2">
    <citation type="submission" date="1997-11" db="EMBL/GenBank/DDBJ databases">
        <title>Nucleotide sequence of mouse spermidine aminopropyltransferase cDNA.</title>
        <authorList>
            <person name="Niiranen K."/>
            <person name="Korhonen V."/>
            <person name="Janne J."/>
        </authorList>
    </citation>
    <scope>NUCLEOTIDE SEQUENCE [MRNA]</scope>
    <source>
        <tissue>Diaphragm</tissue>
    </source>
</reference>
<reference key="3">
    <citation type="journal article" date="2005" name="Science">
        <title>The transcriptional landscape of the mammalian genome.</title>
        <authorList>
            <person name="Carninci P."/>
            <person name="Kasukawa T."/>
            <person name="Katayama S."/>
            <person name="Gough J."/>
            <person name="Frith M.C."/>
            <person name="Maeda N."/>
            <person name="Oyama R."/>
            <person name="Ravasi T."/>
            <person name="Lenhard B."/>
            <person name="Wells C."/>
            <person name="Kodzius R."/>
            <person name="Shimokawa K."/>
            <person name="Bajic V.B."/>
            <person name="Brenner S.E."/>
            <person name="Batalov S."/>
            <person name="Forrest A.R."/>
            <person name="Zavolan M."/>
            <person name="Davis M.J."/>
            <person name="Wilming L.G."/>
            <person name="Aidinis V."/>
            <person name="Allen J.E."/>
            <person name="Ambesi-Impiombato A."/>
            <person name="Apweiler R."/>
            <person name="Aturaliya R.N."/>
            <person name="Bailey T.L."/>
            <person name="Bansal M."/>
            <person name="Baxter L."/>
            <person name="Beisel K.W."/>
            <person name="Bersano T."/>
            <person name="Bono H."/>
            <person name="Chalk A.M."/>
            <person name="Chiu K.P."/>
            <person name="Choudhary V."/>
            <person name="Christoffels A."/>
            <person name="Clutterbuck D.R."/>
            <person name="Crowe M.L."/>
            <person name="Dalla E."/>
            <person name="Dalrymple B.P."/>
            <person name="de Bono B."/>
            <person name="Della Gatta G."/>
            <person name="di Bernardo D."/>
            <person name="Down T."/>
            <person name="Engstrom P."/>
            <person name="Fagiolini M."/>
            <person name="Faulkner G."/>
            <person name="Fletcher C.F."/>
            <person name="Fukushima T."/>
            <person name="Furuno M."/>
            <person name="Futaki S."/>
            <person name="Gariboldi M."/>
            <person name="Georgii-Hemming P."/>
            <person name="Gingeras T.R."/>
            <person name="Gojobori T."/>
            <person name="Green R.E."/>
            <person name="Gustincich S."/>
            <person name="Harbers M."/>
            <person name="Hayashi Y."/>
            <person name="Hensch T.K."/>
            <person name="Hirokawa N."/>
            <person name="Hill D."/>
            <person name="Huminiecki L."/>
            <person name="Iacono M."/>
            <person name="Ikeo K."/>
            <person name="Iwama A."/>
            <person name="Ishikawa T."/>
            <person name="Jakt M."/>
            <person name="Kanapin A."/>
            <person name="Katoh M."/>
            <person name="Kawasawa Y."/>
            <person name="Kelso J."/>
            <person name="Kitamura H."/>
            <person name="Kitano H."/>
            <person name="Kollias G."/>
            <person name="Krishnan S.P."/>
            <person name="Kruger A."/>
            <person name="Kummerfeld S.K."/>
            <person name="Kurochkin I.V."/>
            <person name="Lareau L.F."/>
            <person name="Lazarevic D."/>
            <person name="Lipovich L."/>
            <person name="Liu J."/>
            <person name="Liuni S."/>
            <person name="McWilliam S."/>
            <person name="Madan Babu M."/>
            <person name="Madera M."/>
            <person name="Marchionni L."/>
            <person name="Matsuda H."/>
            <person name="Matsuzawa S."/>
            <person name="Miki H."/>
            <person name="Mignone F."/>
            <person name="Miyake S."/>
            <person name="Morris K."/>
            <person name="Mottagui-Tabar S."/>
            <person name="Mulder N."/>
            <person name="Nakano N."/>
            <person name="Nakauchi H."/>
            <person name="Ng P."/>
            <person name="Nilsson R."/>
            <person name="Nishiguchi S."/>
            <person name="Nishikawa S."/>
            <person name="Nori F."/>
            <person name="Ohara O."/>
            <person name="Okazaki Y."/>
            <person name="Orlando V."/>
            <person name="Pang K.C."/>
            <person name="Pavan W.J."/>
            <person name="Pavesi G."/>
            <person name="Pesole G."/>
            <person name="Petrovsky N."/>
            <person name="Piazza S."/>
            <person name="Reed J."/>
            <person name="Reid J.F."/>
            <person name="Ring B.Z."/>
            <person name="Ringwald M."/>
            <person name="Rost B."/>
            <person name="Ruan Y."/>
            <person name="Salzberg S.L."/>
            <person name="Sandelin A."/>
            <person name="Schneider C."/>
            <person name="Schoenbach C."/>
            <person name="Sekiguchi K."/>
            <person name="Semple C.A."/>
            <person name="Seno S."/>
            <person name="Sessa L."/>
            <person name="Sheng Y."/>
            <person name="Shibata Y."/>
            <person name="Shimada H."/>
            <person name="Shimada K."/>
            <person name="Silva D."/>
            <person name="Sinclair B."/>
            <person name="Sperling S."/>
            <person name="Stupka E."/>
            <person name="Sugiura K."/>
            <person name="Sultana R."/>
            <person name="Takenaka Y."/>
            <person name="Taki K."/>
            <person name="Tammoja K."/>
            <person name="Tan S.L."/>
            <person name="Tang S."/>
            <person name="Taylor M.S."/>
            <person name="Tegner J."/>
            <person name="Teichmann S.A."/>
            <person name="Ueda H.R."/>
            <person name="van Nimwegen E."/>
            <person name="Verardo R."/>
            <person name="Wei C.L."/>
            <person name="Yagi K."/>
            <person name="Yamanishi H."/>
            <person name="Zabarovsky E."/>
            <person name="Zhu S."/>
            <person name="Zimmer A."/>
            <person name="Hide W."/>
            <person name="Bult C."/>
            <person name="Grimmond S.M."/>
            <person name="Teasdale R.D."/>
            <person name="Liu E.T."/>
            <person name="Brusic V."/>
            <person name="Quackenbush J."/>
            <person name="Wahlestedt C."/>
            <person name="Mattick J.S."/>
            <person name="Hume D.A."/>
            <person name="Kai C."/>
            <person name="Sasaki D."/>
            <person name="Tomaru Y."/>
            <person name="Fukuda S."/>
            <person name="Kanamori-Katayama M."/>
            <person name="Suzuki M."/>
            <person name="Aoki J."/>
            <person name="Arakawa T."/>
            <person name="Iida J."/>
            <person name="Imamura K."/>
            <person name="Itoh M."/>
            <person name="Kato T."/>
            <person name="Kawaji H."/>
            <person name="Kawagashira N."/>
            <person name="Kawashima T."/>
            <person name="Kojima M."/>
            <person name="Kondo S."/>
            <person name="Konno H."/>
            <person name="Nakano K."/>
            <person name="Ninomiya N."/>
            <person name="Nishio T."/>
            <person name="Okada M."/>
            <person name="Plessy C."/>
            <person name="Shibata K."/>
            <person name="Shiraki T."/>
            <person name="Suzuki S."/>
            <person name="Tagami M."/>
            <person name="Waki K."/>
            <person name="Watahiki A."/>
            <person name="Okamura-Oho Y."/>
            <person name="Suzuki H."/>
            <person name="Kawai J."/>
            <person name="Hayashizaki Y."/>
        </authorList>
    </citation>
    <scope>NUCLEOTIDE SEQUENCE [LARGE SCALE MRNA]</scope>
    <source>
        <strain>C57BL/6J</strain>
        <tissue>Bone marrow macrophage</tissue>
        <tissue>Embryo</tissue>
        <tissue>Embryonic spinal cord</tissue>
        <tissue>Morula</tissue>
    </source>
</reference>
<reference key="4">
    <citation type="journal article" date="2009" name="PLoS Biol.">
        <title>Lineage-specific biology revealed by a finished genome assembly of the mouse.</title>
        <authorList>
            <person name="Church D.M."/>
            <person name="Goodstadt L."/>
            <person name="Hillier L.W."/>
            <person name="Zody M.C."/>
            <person name="Goldstein S."/>
            <person name="She X."/>
            <person name="Bult C.J."/>
            <person name="Agarwala R."/>
            <person name="Cherry J.L."/>
            <person name="DiCuccio M."/>
            <person name="Hlavina W."/>
            <person name="Kapustin Y."/>
            <person name="Meric P."/>
            <person name="Maglott D."/>
            <person name="Birtle Z."/>
            <person name="Marques A.C."/>
            <person name="Graves T."/>
            <person name="Zhou S."/>
            <person name="Teague B."/>
            <person name="Potamousis K."/>
            <person name="Churas C."/>
            <person name="Place M."/>
            <person name="Herschleb J."/>
            <person name="Runnheim R."/>
            <person name="Forrest D."/>
            <person name="Amos-Landgraf J."/>
            <person name="Schwartz D.C."/>
            <person name="Cheng Z."/>
            <person name="Lindblad-Toh K."/>
            <person name="Eichler E.E."/>
            <person name="Ponting C.P."/>
        </authorList>
    </citation>
    <scope>NUCLEOTIDE SEQUENCE [LARGE SCALE GENOMIC DNA]</scope>
    <source>
        <strain>C57BL/6J</strain>
    </source>
</reference>
<reference key="5">
    <citation type="journal article" date="2004" name="Genome Res.">
        <title>The status, quality, and expansion of the NIH full-length cDNA project: the Mammalian Gene Collection (MGC).</title>
        <authorList>
            <consortium name="The MGC Project Team"/>
        </authorList>
    </citation>
    <scope>NUCLEOTIDE SEQUENCE [LARGE SCALE MRNA]</scope>
    <source>
        <strain>C57BL/6J</strain>
        <tissue>Brain</tissue>
        <tissue>Olfactory epithelium</tissue>
    </source>
</reference>
<reference key="6">
    <citation type="journal article" date="2001" name="Mol. Pharmacol.">
        <title>Spermine deficiency resulting from targeted disruption of the spermine synthase gene in embryonic stem cells leads to enhanced sensitivity to antiproliferative drugs.</title>
        <authorList>
            <person name="Korhonen V.-P."/>
            <person name="Niiranen K."/>
            <person name="Halmekyto M."/>
            <person name="Pietila M."/>
            <person name="Diegelman P."/>
            <person name="Parkkinen J.J."/>
            <person name="Eloranta T."/>
            <person name="Porter C.W."/>
            <person name="Alhonen L."/>
            <person name="Janne J."/>
        </authorList>
    </citation>
    <scope>NUCLEOTIDE SEQUENCE [GENOMIC DNA] OF 58-315</scope>
    <source>
        <strain>129/SvJ</strain>
    </source>
</reference>
<reference key="7">
    <citation type="submission" date="2009-01" db="UniProtKB">
        <authorList>
            <person name="Lubec G."/>
            <person name="Sunyer B."/>
            <person name="Chen W.-Q."/>
        </authorList>
    </citation>
    <scope>PROTEIN SEQUENCE OF 297-307</scope>
    <scope>IDENTIFICATION BY MASS SPECTROMETRY</scope>
    <source>
        <strain>OF1</strain>
        <tissue>Hippocampus</tissue>
    </source>
</reference>
<reference key="8">
    <citation type="journal article" date="1998" name="Hum. Mol. Genet.">
        <title>Spermine deficiency in Gy mice caused by deletion of the spermine synthase gene.</title>
        <authorList>
            <person name="Lorenz B."/>
            <person name="Francis F."/>
            <person name="Gempel K."/>
            <person name="Boeddrich A."/>
            <person name="Josten M."/>
            <person name="Schmahl W."/>
            <person name="Schmidt J."/>
            <person name="Lehrach H."/>
            <person name="Meitinger T."/>
            <person name="Strom T.M."/>
        </authorList>
    </citation>
    <scope>NUCLEOTIDE SEQUENCE [GENOMIC DNA] OF 316-366</scope>
    <scope>FUNCTION</scope>
    <scope>DISRUPTION PHENOTYPE</scope>
</reference>
<reference key="9">
    <citation type="journal article" date="2004" name="J. Biol. Chem.">
        <title>Spermine synthesis is required for normal viability, growth, and fertility in the mouse.</title>
        <authorList>
            <person name="Wang X."/>
            <person name="Ikeguchi Y."/>
            <person name="McCloskey D.E."/>
            <person name="Nelson P."/>
            <person name="Pegg A.E."/>
        </authorList>
    </citation>
    <scope>FUNCTION</scope>
    <scope>DISRUPTION PHENOTYPE</scope>
</reference>
<reference key="10">
    <citation type="journal article" date="2010" name="Cell">
        <title>A tissue-specific atlas of mouse protein phosphorylation and expression.</title>
        <authorList>
            <person name="Huttlin E.L."/>
            <person name="Jedrychowski M.P."/>
            <person name="Elias J.E."/>
            <person name="Goswami T."/>
            <person name="Rad R."/>
            <person name="Beausoleil S.A."/>
            <person name="Villen J."/>
            <person name="Haas W."/>
            <person name="Sowa M.E."/>
            <person name="Gygi S.P."/>
        </authorList>
    </citation>
    <scope>IDENTIFICATION BY MASS SPECTROMETRY [LARGE SCALE ANALYSIS]</scope>
    <source>
        <tissue>Brain</tissue>
        <tissue>Heart</tissue>
        <tissue>Kidney</tissue>
        <tissue>Lung</tissue>
        <tissue>Spleen</tissue>
        <tissue>Testis</tissue>
    </source>
</reference>
<protein>
    <recommendedName>
        <fullName evidence="5">Spermine synthase</fullName>
        <shortName>SPMSY</shortName>
        <ecNumber evidence="1">2.5.1.22</ecNumber>
    </recommendedName>
    <alternativeName>
        <fullName evidence="6">Spermidine aminopropyltransferase</fullName>
    </alternativeName>
</protein>